<gene>
    <name evidence="1" type="primary">ligA</name>
    <name type="synonym">lig</name>
    <name type="ordered locus">RBE_0193</name>
</gene>
<organism>
    <name type="scientific">Rickettsia bellii (strain RML369-C)</name>
    <dbReference type="NCBI Taxonomy" id="336407"/>
    <lineage>
        <taxon>Bacteria</taxon>
        <taxon>Pseudomonadati</taxon>
        <taxon>Pseudomonadota</taxon>
        <taxon>Alphaproteobacteria</taxon>
        <taxon>Rickettsiales</taxon>
        <taxon>Rickettsiaceae</taxon>
        <taxon>Rickettsieae</taxon>
        <taxon>Rickettsia</taxon>
        <taxon>belli group</taxon>
    </lineage>
</organism>
<reference key="1">
    <citation type="journal article" date="2006" name="PLoS Genet.">
        <title>Genome sequence of Rickettsia bellii illuminates the role of amoebae in gene exchanges between intracellular pathogens.</title>
        <authorList>
            <person name="Ogata H."/>
            <person name="La Scola B."/>
            <person name="Audic S."/>
            <person name="Renesto P."/>
            <person name="Blanc G."/>
            <person name="Robert C."/>
            <person name="Fournier P.-E."/>
            <person name="Claverie J.-M."/>
            <person name="Raoult D."/>
        </authorList>
    </citation>
    <scope>NUCLEOTIDE SEQUENCE [LARGE SCALE GENOMIC DNA]</scope>
    <source>
        <strain>RML369-C</strain>
    </source>
</reference>
<comment type="function">
    <text evidence="1">DNA ligase that catalyzes the formation of phosphodiester linkages between 5'-phosphoryl and 3'-hydroxyl groups in double-stranded DNA using NAD as a coenzyme and as the energy source for the reaction. It is essential for DNA replication and repair of damaged DNA.</text>
</comment>
<comment type="catalytic activity">
    <reaction evidence="1">
        <text>NAD(+) + (deoxyribonucleotide)n-3'-hydroxyl + 5'-phospho-(deoxyribonucleotide)m = (deoxyribonucleotide)n+m + AMP + beta-nicotinamide D-nucleotide.</text>
        <dbReference type="EC" id="6.5.1.2"/>
    </reaction>
</comment>
<comment type="cofactor">
    <cofactor evidence="1">
        <name>Mg(2+)</name>
        <dbReference type="ChEBI" id="CHEBI:18420"/>
    </cofactor>
    <cofactor evidence="1">
        <name>Mn(2+)</name>
        <dbReference type="ChEBI" id="CHEBI:29035"/>
    </cofactor>
</comment>
<comment type="similarity">
    <text evidence="1">Belongs to the NAD-dependent DNA ligase family. LigA subfamily.</text>
</comment>
<accession>Q1RK40</accession>
<evidence type="ECO:0000255" key="1">
    <source>
        <dbReference type="HAMAP-Rule" id="MF_01588"/>
    </source>
</evidence>
<keyword id="KW-0227">DNA damage</keyword>
<keyword id="KW-0234">DNA repair</keyword>
<keyword id="KW-0235">DNA replication</keyword>
<keyword id="KW-0436">Ligase</keyword>
<keyword id="KW-0460">Magnesium</keyword>
<keyword id="KW-0464">Manganese</keyword>
<keyword id="KW-0479">Metal-binding</keyword>
<keyword id="KW-0520">NAD</keyword>
<keyword id="KW-0862">Zinc</keyword>
<protein>
    <recommendedName>
        <fullName evidence="1">DNA ligase</fullName>
        <ecNumber evidence="1">6.5.1.2</ecNumber>
    </recommendedName>
    <alternativeName>
        <fullName evidence="1">Polydeoxyribonucleotide synthase [NAD(+)]</fullName>
    </alternativeName>
</protein>
<proteinExistence type="inferred from homology"/>
<sequence length="689" mass="77643">MQNIEKINEEEAKKLLIELADKIAQYNHAYYIEDKPLVSDAEYDQLFNTNLKLEQKFPHLILENSPSKKIGAKVENKFAKVTHQVPMLSLSNVFDEEDVKDFLDRIKSFLRLDQFSPIFCEPKIDGLSFAATYKNGILTTGATRGDGYIGEDITANIKTIKDFPHKINNAPELLEVRGEIYIEKNDFTSLNQEQEQQGKDKFANPRNAAAGSLRQLDPSVTAKRPLKYFVYAIGSAKEELANSQDQLLAKFKELGFNVNEIGKLANSEEEIFSFYEYLKTNRKNLPYEIDGVVYKLNDFALQDRMGFIARSPRFATAHKFPAIIGQTKLLSITVQVGRTGTLTPVAELEPIEIGGVIVSRATLHNYQEIARKDVRVGDYVFLQRAGDVIPQITGVDLAKRSADATTFDPPLFCPSCNSKLHYVPEDIIIRCDNGLNCPAQNYERIRHFVSKNAMDIEGLGRKQVEFLIDKGLISNPYDIFFLKEKNEASLTKLENMDGWGKKSVENLFNNIEKSKNVSLPRFIYALGIRHIGEQNAKLLTREFGSYENFIAQMELLKENDPEIYQKLNNLDGIGDKMLVDIIDFFDVKENIELIKNLSEVLNIEDYKETREQSSLTGKIVVFTGSMPTLSRAEAKATAEKLGAKVAASVSSNTDLVIAGEDAGSKLKKAKELGIKIIDEAEWLTLVRDI</sequence>
<name>DNLJ_RICBR</name>
<dbReference type="EC" id="6.5.1.2" evidence="1"/>
<dbReference type="EMBL" id="CP000087">
    <property type="protein sequence ID" value="ABE04274.1"/>
    <property type="molecule type" value="Genomic_DNA"/>
</dbReference>
<dbReference type="RefSeq" id="WP_011476888.1">
    <property type="nucleotide sequence ID" value="NC_007940.1"/>
</dbReference>
<dbReference type="SMR" id="Q1RK40"/>
<dbReference type="KEGG" id="rbe:RBE_0193"/>
<dbReference type="eggNOG" id="COG0272">
    <property type="taxonomic scope" value="Bacteria"/>
</dbReference>
<dbReference type="HOGENOM" id="CLU_007764_2_1_5"/>
<dbReference type="OrthoDB" id="9759736at2"/>
<dbReference type="Proteomes" id="UP000001951">
    <property type="component" value="Chromosome"/>
</dbReference>
<dbReference type="GO" id="GO:0005829">
    <property type="term" value="C:cytosol"/>
    <property type="evidence" value="ECO:0007669"/>
    <property type="project" value="TreeGrafter"/>
</dbReference>
<dbReference type="GO" id="GO:0003911">
    <property type="term" value="F:DNA ligase (NAD+) activity"/>
    <property type="evidence" value="ECO:0007669"/>
    <property type="project" value="UniProtKB-UniRule"/>
</dbReference>
<dbReference type="GO" id="GO:0046872">
    <property type="term" value="F:metal ion binding"/>
    <property type="evidence" value="ECO:0007669"/>
    <property type="project" value="UniProtKB-KW"/>
</dbReference>
<dbReference type="GO" id="GO:0006281">
    <property type="term" value="P:DNA repair"/>
    <property type="evidence" value="ECO:0007669"/>
    <property type="project" value="UniProtKB-KW"/>
</dbReference>
<dbReference type="GO" id="GO:0006260">
    <property type="term" value="P:DNA replication"/>
    <property type="evidence" value="ECO:0007669"/>
    <property type="project" value="UniProtKB-KW"/>
</dbReference>
<dbReference type="CDD" id="cd17748">
    <property type="entry name" value="BRCT_DNA_ligase_like"/>
    <property type="match status" value="1"/>
</dbReference>
<dbReference type="CDD" id="cd00114">
    <property type="entry name" value="LIGANc"/>
    <property type="match status" value="1"/>
</dbReference>
<dbReference type="FunFam" id="1.10.150.20:FF:000007">
    <property type="entry name" value="DNA ligase"/>
    <property type="match status" value="1"/>
</dbReference>
<dbReference type="FunFam" id="2.40.50.140:FF:000012">
    <property type="entry name" value="DNA ligase"/>
    <property type="match status" value="1"/>
</dbReference>
<dbReference type="FunFam" id="3.30.470.30:FF:000001">
    <property type="entry name" value="DNA ligase"/>
    <property type="match status" value="1"/>
</dbReference>
<dbReference type="Gene3D" id="6.20.10.30">
    <property type="match status" value="1"/>
</dbReference>
<dbReference type="Gene3D" id="1.10.150.20">
    <property type="entry name" value="5' to 3' exonuclease, C-terminal subdomain"/>
    <property type="match status" value="2"/>
</dbReference>
<dbReference type="Gene3D" id="3.40.50.10190">
    <property type="entry name" value="BRCT domain"/>
    <property type="match status" value="1"/>
</dbReference>
<dbReference type="Gene3D" id="3.30.470.30">
    <property type="entry name" value="DNA ligase/mRNA capping enzyme"/>
    <property type="match status" value="1"/>
</dbReference>
<dbReference type="Gene3D" id="1.10.287.610">
    <property type="entry name" value="Helix hairpin bin"/>
    <property type="match status" value="1"/>
</dbReference>
<dbReference type="Gene3D" id="2.40.50.140">
    <property type="entry name" value="Nucleic acid-binding proteins"/>
    <property type="match status" value="1"/>
</dbReference>
<dbReference type="HAMAP" id="MF_01588">
    <property type="entry name" value="DNA_ligase_A"/>
    <property type="match status" value="1"/>
</dbReference>
<dbReference type="InterPro" id="IPR001357">
    <property type="entry name" value="BRCT_dom"/>
</dbReference>
<dbReference type="InterPro" id="IPR036420">
    <property type="entry name" value="BRCT_dom_sf"/>
</dbReference>
<dbReference type="InterPro" id="IPR041663">
    <property type="entry name" value="DisA/LigA_HHH"/>
</dbReference>
<dbReference type="InterPro" id="IPR001679">
    <property type="entry name" value="DNA_ligase"/>
</dbReference>
<dbReference type="InterPro" id="IPR018239">
    <property type="entry name" value="DNA_ligase_AS"/>
</dbReference>
<dbReference type="InterPro" id="IPR033136">
    <property type="entry name" value="DNA_ligase_CS"/>
</dbReference>
<dbReference type="InterPro" id="IPR013839">
    <property type="entry name" value="DNAligase_adenylation"/>
</dbReference>
<dbReference type="InterPro" id="IPR013840">
    <property type="entry name" value="DNAligase_N"/>
</dbReference>
<dbReference type="InterPro" id="IPR012340">
    <property type="entry name" value="NA-bd_OB-fold"/>
</dbReference>
<dbReference type="InterPro" id="IPR004150">
    <property type="entry name" value="NAD_DNA_ligase_OB"/>
</dbReference>
<dbReference type="InterPro" id="IPR010994">
    <property type="entry name" value="RuvA_2-like"/>
</dbReference>
<dbReference type="InterPro" id="IPR004149">
    <property type="entry name" value="Znf_DNAligase_C4"/>
</dbReference>
<dbReference type="NCBIfam" id="TIGR00575">
    <property type="entry name" value="dnlj"/>
    <property type="match status" value="1"/>
</dbReference>
<dbReference type="NCBIfam" id="NF005932">
    <property type="entry name" value="PRK07956.1"/>
    <property type="match status" value="1"/>
</dbReference>
<dbReference type="PANTHER" id="PTHR23389">
    <property type="entry name" value="CHROMOSOME TRANSMISSION FIDELITY FACTOR 18"/>
    <property type="match status" value="1"/>
</dbReference>
<dbReference type="PANTHER" id="PTHR23389:SF9">
    <property type="entry name" value="DNA LIGASE"/>
    <property type="match status" value="1"/>
</dbReference>
<dbReference type="Pfam" id="PF00533">
    <property type="entry name" value="BRCT"/>
    <property type="match status" value="1"/>
</dbReference>
<dbReference type="Pfam" id="PF01653">
    <property type="entry name" value="DNA_ligase_aden"/>
    <property type="match status" value="1"/>
</dbReference>
<dbReference type="Pfam" id="PF03120">
    <property type="entry name" value="DNA_ligase_OB"/>
    <property type="match status" value="1"/>
</dbReference>
<dbReference type="Pfam" id="PF03119">
    <property type="entry name" value="DNA_ligase_ZBD"/>
    <property type="match status" value="1"/>
</dbReference>
<dbReference type="Pfam" id="PF12826">
    <property type="entry name" value="HHH_2"/>
    <property type="match status" value="1"/>
</dbReference>
<dbReference type="PIRSF" id="PIRSF001604">
    <property type="entry name" value="LigA"/>
    <property type="match status" value="1"/>
</dbReference>
<dbReference type="SMART" id="SM00292">
    <property type="entry name" value="BRCT"/>
    <property type="match status" value="1"/>
</dbReference>
<dbReference type="SMART" id="SM00532">
    <property type="entry name" value="LIGANc"/>
    <property type="match status" value="1"/>
</dbReference>
<dbReference type="SUPFAM" id="SSF52113">
    <property type="entry name" value="BRCT domain"/>
    <property type="match status" value="1"/>
</dbReference>
<dbReference type="SUPFAM" id="SSF56091">
    <property type="entry name" value="DNA ligase/mRNA capping enzyme, catalytic domain"/>
    <property type="match status" value="1"/>
</dbReference>
<dbReference type="SUPFAM" id="SSF50249">
    <property type="entry name" value="Nucleic acid-binding proteins"/>
    <property type="match status" value="1"/>
</dbReference>
<dbReference type="SUPFAM" id="SSF47781">
    <property type="entry name" value="RuvA domain 2-like"/>
    <property type="match status" value="1"/>
</dbReference>
<dbReference type="PROSITE" id="PS50172">
    <property type="entry name" value="BRCT"/>
    <property type="match status" value="1"/>
</dbReference>
<dbReference type="PROSITE" id="PS01055">
    <property type="entry name" value="DNA_LIGASE_N1"/>
    <property type="match status" value="1"/>
</dbReference>
<dbReference type="PROSITE" id="PS01056">
    <property type="entry name" value="DNA_LIGASE_N2"/>
    <property type="match status" value="1"/>
</dbReference>
<feature type="chain" id="PRO_0000280945" description="DNA ligase">
    <location>
        <begin position="1"/>
        <end position="689"/>
    </location>
</feature>
<feature type="domain" description="BRCT" evidence="1">
    <location>
        <begin position="610"/>
        <end position="689"/>
    </location>
</feature>
<feature type="active site" description="N6-AMP-lysine intermediate" evidence="1">
    <location>
        <position position="123"/>
    </location>
</feature>
<feature type="binding site" evidence="1">
    <location>
        <begin position="40"/>
        <end position="44"/>
    </location>
    <ligand>
        <name>NAD(+)</name>
        <dbReference type="ChEBI" id="CHEBI:57540"/>
    </ligand>
</feature>
<feature type="binding site" evidence="1">
    <location>
        <begin position="89"/>
        <end position="90"/>
    </location>
    <ligand>
        <name>NAD(+)</name>
        <dbReference type="ChEBI" id="CHEBI:57540"/>
    </ligand>
</feature>
<feature type="binding site" evidence="1">
    <location>
        <position position="121"/>
    </location>
    <ligand>
        <name>NAD(+)</name>
        <dbReference type="ChEBI" id="CHEBI:57540"/>
    </ligand>
</feature>
<feature type="binding site" evidence="1">
    <location>
        <position position="144"/>
    </location>
    <ligand>
        <name>NAD(+)</name>
        <dbReference type="ChEBI" id="CHEBI:57540"/>
    </ligand>
</feature>
<feature type="binding site" evidence="1">
    <location>
        <position position="179"/>
    </location>
    <ligand>
        <name>NAD(+)</name>
        <dbReference type="ChEBI" id="CHEBI:57540"/>
    </ligand>
</feature>
<feature type="binding site" evidence="1">
    <location>
        <position position="295"/>
    </location>
    <ligand>
        <name>NAD(+)</name>
        <dbReference type="ChEBI" id="CHEBI:57540"/>
    </ligand>
</feature>
<feature type="binding site" evidence="1">
    <location>
        <position position="319"/>
    </location>
    <ligand>
        <name>NAD(+)</name>
        <dbReference type="ChEBI" id="CHEBI:57540"/>
    </ligand>
</feature>
<feature type="binding site" evidence="1">
    <location>
        <position position="413"/>
    </location>
    <ligand>
        <name>Zn(2+)</name>
        <dbReference type="ChEBI" id="CHEBI:29105"/>
    </ligand>
</feature>
<feature type="binding site" evidence="1">
    <location>
        <position position="416"/>
    </location>
    <ligand>
        <name>Zn(2+)</name>
        <dbReference type="ChEBI" id="CHEBI:29105"/>
    </ligand>
</feature>
<feature type="binding site" evidence="1">
    <location>
        <position position="431"/>
    </location>
    <ligand>
        <name>Zn(2+)</name>
        <dbReference type="ChEBI" id="CHEBI:29105"/>
    </ligand>
</feature>
<feature type="binding site" evidence="1">
    <location>
        <position position="437"/>
    </location>
    <ligand>
        <name>Zn(2+)</name>
        <dbReference type="ChEBI" id="CHEBI:29105"/>
    </ligand>
</feature>